<protein>
    <recommendedName>
        <fullName>Inner membrane protein YjgN</fullName>
    </recommendedName>
    <alternativeName>
        <fullName>ORF X</fullName>
    </alternativeName>
</protein>
<feature type="chain" id="PRO_0000169770" description="Inner membrane protein YjgN">
    <location>
        <begin position="1"/>
        <end position="395"/>
    </location>
</feature>
<feature type="topological domain" description="Cytoplasmic" evidence="2">
    <location>
        <begin position="1"/>
        <end position="24"/>
    </location>
</feature>
<feature type="transmembrane region" description="Helical" evidence="2">
    <location>
        <begin position="25"/>
        <end position="45"/>
    </location>
</feature>
<feature type="topological domain" description="Periplasmic" evidence="2">
    <location>
        <begin position="46"/>
        <end position="71"/>
    </location>
</feature>
<feature type="transmembrane region" description="Helical" evidence="2">
    <location>
        <begin position="72"/>
        <end position="92"/>
    </location>
</feature>
<feature type="topological domain" description="Cytoplasmic" evidence="2">
    <location>
        <begin position="93"/>
        <end position="95"/>
    </location>
</feature>
<feature type="transmembrane region" description="Helical" evidence="2">
    <location>
        <begin position="96"/>
        <end position="116"/>
    </location>
</feature>
<feature type="topological domain" description="Periplasmic" evidence="2">
    <location>
        <begin position="117"/>
        <end position="146"/>
    </location>
</feature>
<feature type="transmembrane region" description="Helical" evidence="2">
    <location>
        <begin position="147"/>
        <end position="167"/>
    </location>
</feature>
<feature type="topological domain" description="Cytoplasmic" evidence="2">
    <location>
        <position position="168"/>
    </location>
</feature>
<feature type="transmembrane region" description="Helical" evidence="2">
    <location>
        <begin position="169"/>
        <end position="189"/>
    </location>
</feature>
<feature type="topological domain" description="Periplasmic" evidence="2">
    <location>
        <begin position="190"/>
        <end position="229"/>
    </location>
</feature>
<feature type="transmembrane region" description="Helical" evidence="2">
    <location>
        <begin position="230"/>
        <end position="250"/>
    </location>
</feature>
<feature type="topological domain" description="Cytoplasmic" evidence="2">
    <location>
        <begin position="251"/>
        <end position="275"/>
    </location>
</feature>
<feature type="transmembrane region" description="Helical" evidence="2">
    <location>
        <begin position="276"/>
        <end position="296"/>
    </location>
</feature>
<feature type="topological domain" description="Periplasmic" evidence="2">
    <location>
        <begin position="297"/>
        <end position="327"/>
    </location>
</feature>
<feature type="transmembrane region" description="Helical" evidence="2">
    <location>
        <begin position="328"/>
        <end position="348"/>
    </location>
</feature>
<feature type="topological domain" description="Cytoplasmic" evidence="2">
    <location>
        <begin position="349"/>
        <end position="395"/>
    </location>
</feature>
<feature type="sequence conflict" description="In Ref. 2." evidence="3" ref="2">
    <original>SI</original>
    <variation>R</variation>
    <location>
        <begin position="312"/>
        <end position="313"/>
    </location>
</feature>
<comment type="subcellular location">
    <subcellularLocation>
        <location evidence="1">Cell inner membrane</location>
        <topology evidence="1">Multi-pass membrane protein</topology>
    </subcellularLocation>
</comment>
<gene>
    <name type="primary">yjgN</name>
    <name type="ordered locus">STM4474</name>
</gene>
<keyword id="KW-0997">Cell inner membrane</keyword>
<keyword id="KW-1003">Cell membrane</keyword>
<keyword id="KW-0472">Membrane</keyword>
<keyword id="KW-1185">Reference proteome</keyword>
<keyword id="KW-0812">Transmembrane</keyword>
<keyword id="KW-1133">Transmembrane helix</keyword>
<organism>
    <name type="scientific">Salmonella typhimurium (strain LT2 / SGSC1412 / ATCC 700720)</name>
    <dbReference type="NCBI Taxonomy" id="99287"/>
    <lineage>
        <taxon>Bacteria</taxon>
        <taxon>Pseudomonadati</taxon>
        <taxon>Pseudomonadota</taxon>
        <taxon>Gammaproteobacteria</taxon>
        <taxon>Enterobacterales</taxon>
        <taxon>Enterobacteriaceae</taxon>
        <taxon>Salmonella</taxon>
    </lineage>
</organism>
<proteinExistence type="inferred from homology"/>
<dbReference type="EMBL" id="AE006468">
    <property type="protein sequence ID" value="AAL23293.1"/>
    <property type="molecule type" value="Genomic_DNA"/>
</dbReference>
<dbReference type="EMBL" id="X73368">
    <property type="protein sequence ID" value="CAA51785.1"/>
    <property type="molecule type" value="Genomic_DNA"/>
</dbReference>
<dbReference type="RefSeq" id="NP_463334.1">
    <property type="nucleotide sequence ID" value="NC_003197.2"/>
</dbReference>
<dbReference type="RefSeq" id="WP_001066984.1">
    <property type="nucleotide sequence ID" value="NC_003197.2"/>
</dbReference>
<dbReference type="STRING" id="99287.STM4474"/>
<dbReference type="PaxDb" id="99287-STM4474"/>
<dbReference type="GeneID" id="1256000"/>
<dbReference type="KEGG" id="stm:STM4474"/>
<dbReference type="PATRIC" id="fig|99287.12.peg.4710"/>
<dbReference type="HOGENOM" id="CLU_049287_2_0_6"/>
<dbReference type="OMA" id="EYFRIWI"/>
<dbReference type="PhylomeDB" id="Q08022"/>
<dbReference type="BioCyc" id="SENT99287:STM4474-MONOMER"/>
<dbReference type="Proteomes" id="UP000001014">
    <property type="component" value="Chromosome"/>
</dbReference>
<dbReference type="GO" id="GO:0005886">
    <property type="term" value="C:plasma membrane"/>
    <property type="evidence" value="ECO:0007669"/>
    <property type="project" value="UniProtKB-SubCell"/>
</dbReference>
<dbReference type="InterPro" id="IPR010295">
    <property type="entry name" value="DUF898"/>
</dbReference>
<dbReference type="Pfam" id="PF05987">
    <property type="entry name" value="DUF898"/>
    <property type="match status" value="1"/>
</dbReference>
<evidence type="ECO:0000250" key="1"/>
<evidence type="ECO:0000255" key="2"/>
<evidence type="ECO:0000305" key="3"/>
<name>YJGN_SALTY</name>
<reference key="1">
    <citation type="journal article" date="2001" name="Nature">
        <title>Complete genome sequence of Salmonella enterica serovar Typhimurium LT2.</title>
        <authorList>
            <person name="McClelland M."/>
            <person name="Sanderson K.E."/>
            <person name="Spieth J."/>
            <person name="Clifton S.W."/>
            <person name="Latreille P."/>
            <person name="Courtney L."/>
            <person name="Porwollik S."/>
            <person name="Ali J."/>
            <person name="Dante M."/>
            <person name="Du F."/>
            <person name="Hou S."/>
            <person name="Layman D."/>
            <person name="Leonard S."/>
            <person name="Nguyen C."/>
            <person name="Scott K."/>
            <person name="Holmes A."/>
            <person name="Grewal N."/>
            <person name="Mulvaney E."/>
            <person name="Ryan E."/>
            <person name="Sun H."/>
            <person name="Florea L."/>
            <person name="Miller W."/>
            <person name="Stoneking T."/>
            <person name="Nhan M."/>
            <person name="Waterston R."/>
            <person name="Wilson R.K."/>
        </authorList>
    </citation>
    <scope>NUCLEOTIDE SEQUENCE [LARGE SCALE GENOMIC DNA]</scope>
    <source>
        <strain>LT2 / SGSC1412 / ATCC 700720</strain>
    </source>
</reference>
<reference key="2">
    <citation type="journal article" date="1993" name="J. Bacteriol.">
        <title>Isolation of the gene (miaE) encoding the hydroxylase involved in the synthesis of 2-methylthio-cis-ribozeatin in tRNA of Salmonella typhimurium and characterization of mutants.</title>
        <authorList>
            <person name="Persson B.C."/>
            <person name="Bjoerk G.R."/>
        </authorList>
    </citation>
    <scope>NUCLEOTIDE SEQUENCE [GENOMIC DNA] OF 1-315</scope>
    <source>
        <strain>LT2</strain>
    </source>
</reference>
<accession>Q08022</accession>
<sequence length="395" mass="44107">MNNVISSKDNHNHTLVFTGKGGKYFVICLVNFLLTCITLGIYAPWAMVKCRRYIYTNMTLNNQPFAYKATGGALFISVLLVFIIYIVSLSLIEHGHPGLGFTLFGLLIAIIPFMAVKGLQYQAMMTSLNGVHFGFQCSMRRAWWYMFALPVLLMVALYIVLYIISLVTIAVGGLVFSIVFLGLLAIIGIGVINGITYSKWMTLFGNGANFGIHRFSIQVNVKTCIRGCVLAMLTLFPFAVVIGYLIAPVFTDMILLSMMGNAQAGGALILQYYGQIMACYFLYFLAIIVVTSYLYVALRNLFLNNLSLANDSIRFHSSVTAHGMLWRLLVVFVISGVTLGLAYPWLKIWLVSWLAQNTQVQGDLDSLELTNDEKPLENSPLMWISRGIMPYFPFI</sequence>